<evidence type="ECO:0000250" key="1">
    <source>
        <dbReference type="UniProtKB" id="Q8N138"/>
    </source>
</evidence>
<evidence type="ECO:0000250" key="2">
    <source>
        <dbReference type="UniProtKB" id="Q921I0"/>
    </source>
</evidence>
<evidence type="ECO:0000250" key="3">
    <source>
        <dbReference type="UniProtKB" id="Q9P0S3"/>
    </source>
</evidence>
<evidence type="ECO:0000255" key="4"/>
<evidence type="ECO:0000305" key="5"/>
<dbReference type="EMBL" id="CR859623">
    <property type="protein sequence ID" value="CAH91785.1"/>
    <property type="molecule type" value="mRNA"/>
</dbReference>
<dbReference type="RefSeq" id="NP_001127461.1">
    <property type="nucleotide sequence ID" value="NM_001133989.2"/>
</dbReference>
<dbReference type="RefSeq" id="XP_009236172.1">
    <property type="nucleotide sequence ID" value="XM_009237897.4"/>
</dbReference>
<dbReference type="RefSeq" id="XP_009236173.1">
    <property type="nucleotide sequence ID" value="XM_009237898.4"/>
</dbReference>
<dbReference type="RefSeq" id="XP_009236174.1">
    <property type="nucleotide sequence ID" value="XM_009237899.4"/>
</dbReference>
<dbReference type="RefSeq" id="XP_009236176.1">
    <property type="nucleotide sequence ID" value="XM_009237901.4"/>
</dbReference>
<dbReference type="RefSeq" id="XP_009236177.1">
    <property type="nucleotide sequence ID" value="XM_009237902.1"/>
</dbReference>
<dbReference type="RefSeq" id="XP_009236178.1">
    <property type="nucleotide sequence ID" value="XM_009237903.4"/>
</dbReference>
<dbReference type="RefSeq" id="XP_009236179.1">
    <property type="nucleotide sequence ID" value="XM_009237904.4"/>
</dbReference>
<dbReference type="RefSeq" id="XP_063568644.1">
    <property type="nucleotide sequence ID" value="XM_063712574.1"/>
</dbReference>
<dbReference type="RefSeq" id="XP_063568646.1">
    <property type="nucleotide sequence ID" value="XM_063712576.1"/>
</dbReference>
<dbReference type="SMR" id="Q5R8X5"/>
<dbReference type="FunCoup" id="Q5R8X5">
    <property type="interactions" value="1698"/>
</dbReference>
<dbReference type="STRING" id="9601.ENSPPYP00000014542"/>
<dbReference type="Ensembl" id="ENSPPYT00000015131.2">
    <property type="protein sequence ID" value="ENSPPYP00000014542.2"/>
    <property type="gene ID" value="ENSPPYG00000013017.3"/>
</dbReference>
<dbReference type="GeneID" id="100174534"/>
<dbReference type="KEGG" id="pon:100174534"/>
<dbReference type="CTD" id="94101"/>
<dbReference type="eggNOG" id="KOG3319">
    <property type="taxonomic scope" value="Eukaryota"/>
</dbReference>
<dbReference type="GeneTree" id="ENSGT00950000183178"/>
<dbReference type="HOGENOM" id="CLU_072117_3_0_1"/>
<dbReference type="InParanoid" id="Q5R8X5"/>
<dbReference type="OMA" id="IVSAFRC"/>
<dbReference type="OrthoDB" id="1932233at2759"/>
<dbReference type="Proteomes" id="UP000001595">
    <property type="component" value="Chromosome 2B"/>
</dbReference>
<dbReference type="GO" id="GO:0005789">
    <property type="term" value="C:endoplasmic reticulum membrane"/>
    <property type="evidence" value="ECO:0000250"/>
    <property type="project" value="UniProtKB"/>
</dbReference>
<dbReference type="GO" id="GO:0006672">
    <property type="term" value="P:ceramide metabolic process"/>
    <property type="evidence" value="ECO:0000250"/>
    <property type="project" value="UniProtKB"/>
</dbReference>
<dbReference type="GO" id="GO:0061744">
    <property type="term" value="P:motor behavior"/>
    <property type="evidence" value="ECO:0007669"/>
    <property type="project" value="Ensembl"/>
</dbReference>
<dbReference type="GO" id="GO:0042552">
    <property type="term" value="P:myelination"/>
    <property type="evidence" value="ECO:0007669"/>
    <property type="project" value="Ensembl"/>
</dbReference>
<dbReference type="GO" id="GO:1900060">
    <property type="term" value="P:negative regulation of ceramide biosynthetic process"/>
    <property type="evidence" value="ECO:0007669"/>
    <property type="project" value="Ensembl"/>
</dbReference>
<dbReference type="GO" id="GO:0006686">
    <property type="term" value="P:sphingomyelin biosynthetic process"/>
    <property type="evidence" value="ECO:0007669"/>
    <property type="project" value="Ensembl"/>
</dbReference>
<dbReference type="InterPro" id="IPR007203">
    <property type="entry name" value="ORMDL"/>
</dbReference>
<dbReference type="PANTHER" id="PTHR12665">
    <property type="entry name" value="ORMDL PROTEINS"/>
    <property type="match status" value="1"/>
</dbReference>
<dbReference type="Pfam" id="PF04061">
    <property type="entry name" value="ORMDL"/>
    <property type="match status" value="1"/>
</dbReference>
<dbReference type="PIRSF" id="PIRSF018147">
    <property type="entry name" value="ORMDL"/>
    <property type="match status" value="1"/>
</dbReference>
<feature type="chain" id="PRO_0000215632" description="ORM1-like protein 1">
    <location>
        <begin position="1"/>
        <end position="153"/>
    </location>
</feature>
<feature type="topological domain" description="Cytoplasmic" evidence="4">
    <location>
        <begin position="1"/>
        <end position="26"/>
    </location>
</feature>
<feature type="transmembrane region" description="Helical" evidence="4">
    <location>
        <begin position="27"/>
        <end position="46"/>
    </location>
</feature>
<feature type="transmembrane region" description="Helical" evidence="4">
    <location>
        <begin position="47"/>
        <end position="64"/>
    </location>
</feature>
<feature type="topological domain" description="Cytoplasmic" evidence="4">
    <location>
        <begin position="65"/>
        <end position="100"/>
    </location>
</feature>
<feature type="transmembrane region" description="Helical" evidence="4">
    <location>
        <begin position="101"/>
        <end position="121"/>
    </location>
</feature>
<feature type="topological domain" description="Extracellular" evidence="4">
    <location>
        <begin position="122"/>
        <end position="123"/>
    </location>
</feature>
<feature type="transmembrane region" description="Helical" evidence="4">
    <location>
        <begin position="124"/>
        <end position="140"/>
    </location>
</feature>
<feature type="topological domain" description="Cytoplasmic" evidence="4">
    <location>
        <begin position="141"/>
        <end position="153"/>
    </location>
</feature>
<accession>Q5R8X5</accession>
<organism>
    <name type="scientific">Pongo abelii</name>
    <name type="common">Sumatran orangutan</name>
    <name type="synonym">Pongo pygmaeus abelii</name>
    <dbReference type="NCBI Taxonomy" id="9601"/>
    <lineage>
        <taxon>Eukaryota</taxon>
        <taxon>Metazoa</taxon>
        <taxon>Chordata</taxon>
        <taxon>Craniata</taxon>
        <taxon>Vertebrata</taxon>
        <taxon>Euteleostomi</taxon>
        <taxon>Mammalia</taxon>
        <taxon>Eutheria</taxon>
        <taxon>Euarchontoglires</taxon>
        <taxon>Primates</taxon>
        <taxon>Haplorrhini</taxon>
        <taxon>Catarrhini</taxon>
        <taxon>Hominidae</taxon>
        <taxon>Pongo</taxon>
    </lineage>
</organism>
<comment type="function">
    <text evidence="1 2">Plays an essential role in the homeostatic regulation of sphingolipid de novo biosynthesis by modulating the activity of the serine palmitoyltransferase (SPT) in response to ceramide levels (By similarity). When complexed to SPT, the binding of ceramides to its N-terminus stabilizes a conformation that block SPT substrate entry, hence preventing SPT catalytic activity. Through this mechanism, maintains ceramide levels at sufficient concentrations for the production of complex sphingolipids, but which prevents the accumulation of ceramides to levels that trigger apoptosis (By similarity).</text>
</comment>
<comment type="subunit">
    <text evidence="1">Ceramide-sensitive subunit of the serine palmitoyltransferase (SPT) complex, which is also composed of SPTLC1, SPTLC2/3 and SPTSSA/B.</text>
</comment>
<comment type="subcellular location">
    <subcellularLocation>
        <location evidence="3">Endoplasmic reticulum membrane</location>
        <topology evidence="3">Multi-pass membrane protein</topology>
    </subcellularLocation>
</comment>
<comment type="domain">
    <text evidence="1">Ceramides bind to ORMDL3 N-terminus and stabilize it in a conformation that physically restricts the accessibility of the substrates to their binding sites in the serine palmitoyltransferase (SPT) complex, hence inhibiting SPT catalytic activity. In the absence of ceramides, the N-terminus is flexible and permits substrate binding, thus liberating SPT from inhibition.</text>
</comment>
<comment type="similarity">
    <text evidence="5">Belongs to the ORM family.</text>
</comment>
<sequence>MNVGVAHSEVNPNTRVMNSRGMWLTYALGVGLLHIVLLSIPFFSVPVAWTLTNIIHNLGMYVFLHAVKGTPFETPDQGKARLLTHWEQLDYGVQFTSSRKFFTISPIILYFLASFYTKYDPTHFILNTASLLSVLIPKMPQLHGVRIFGINKY</sequence>
<name>ORML1_PONAB</name>
<reference key="1">
    <citation type="submission" date="2004-11" db="EMBL/GenBank/DDBJ databases">
        <authorList>
            <consortium name="The German cDNA consortium"/>
        </authorList>
    </citation>
    <scope>NUCLEOTIDE SEQUENCE [LARGE SCALE MRNA]</scope>
    <source>
        <tissue>Brain cortex</tissue>
    </source>
</reference>
<protein>
    <recommendedName>
        <fullName>ORM1-like protein 1</fullName>
    </recommendedName>
</protein>
<proteinExistence type="evidence at transcript level"/>
<gene>
    <name type="primary">ORMDL1</name>
</gene>
<keyword id="KW-0256">Endoplasmic reticulum</keyword>
<keyword id="KW-0472">Membrane</keyword>
<keyword id="KW-1185">Reference proteome</keyword>
<keyword id="KW-0812">Transmembrane</keyword>
<keyword id="KW-1133">Transmembrane helix</keyword>